<evidence type="ECO:0000269" key="1">
    <source>
    </source>
</evidence>
<evidence type="ECO:0000303" key="2">
    <source>
    </source>
</evidence>
<evidence type="ECO:0000305" key="3"/>
<evidence type="ECO:0000305" key="4">
    <source>
    </source>
</evidence>
<evidence type="ECO:0000312" key="5">
    <source>
        <dbReference type="EMBL" id="AAY47797.1"/>
    </source>
</evidence>
<evidence type="ECO:0007744" key="6">
    <source>
        <dbReference type="PDB" id="7YQO"/>
    </source>
</evidence>
<evidence type="ECO:0007744" key="7">
    <source>
        <dbReference type="PDB" id="7YQP"/>
    </source>
</evidence>
<evidence type="ECO:0007744" key="8">
    <source>
        <dbReference type="PDB" id="7YQQ"/>
    </source>
</evidence>
<evidence type="ECO:0007744" key="9">
    <source>
        <dbReference type="PDB" id="7YQR"/>
    </source>
</evidence>
<evidence type="ECO:0007744" key="10">
    <source>
        <dbReference type="PDB" id="8IGZ"/>
    </source>
</evidence>
<evidence type="ECO:0007829" key="11">
    <source>
        <dbReference type="PDB" id="7YQO"/>
    </source>
</evidence>
<reference key="1">
    <citation type="journal article" date="2005" name="Genome Res.">
        <title>Comparative and functional genomic analyses of the pathogenicity of phytopathogen Xanthomonas campestris pv. campestris.</title>
        <authorList>
            <person name="Qian W."/>
            <person name="Jia Y."/>
            <person name="Ren S.-X."/>
            <person name="He Y.-Q."/>
            <person name="Feng J.-X."/>
            <person name="Lu L.-F."/>
            <person name="Sun Q."/>
            <person name="Ying G."/>
            <person name="Tang D.-J."/>
            <person name="Tang H."/>
            <person name="Wu W."/>
            <person name="Hao P."/>
            <person name="Wang L."/>
            <person name="Jiang B.-L."/>
            <person name="Zeng S."/>
            <person name="Gu W.-Y."/>
            <person name="Lu G."/>
            <person name="Rong L."/>
            <person name="Tian Y."/>
            <person name="Yao Z."/>
            <person name="Fu G."/>
            <person name="Chen B."/>
            <person name="Fang R."/>
            <person name="Qiang B."/>
            <person name="Chen Z."/>
            <person name="Zhao G.-P."/>
            <person name="Tang J.-L."/>
            <person name="He C."/>
        </authorList>
    </citation>
    <scope>NUCLEOTIDE SEQUENCE [LARGE SCALE GENOMIC DNA]</scope>
    <source>
        <strain>8004</strain>
    </source>
</reference>
<reference evidence="6 7 8 9 10" key="2">
    <citation type="journal article" date="2024" name="Commun. Biol.">
        <title>Structural insights into Xanthomonas campestris pv. campestris NAD+ biosynthesis via the NAM salvage pathway.</title>
        <authorList>
            <person name="Xu G."/>
            <person name="Ma J."/>
            <person name="Fang Q."/>
            <person name="Peng Q."/>
            <person name="Jiao X."/>
            <person name="Hu W."/>
            <person name="Zhao Q."/>
            <person name="Kong Y."/>
            <person name="Liu F."/>
            <person name="Shi X."/>
            <person name="Tang D.J."/>
            <person name="Tang J.L."/>
            <person name="Ming Z."/>
        </authorList>
    </citation>
    <scope>X-RAY CRYSTALLOGRAPHY (1.79 ANGSTROMS) OF APOENZYME; WILD-TYPE IN COMPLEXES WITH NICOTINAMIDE AND BETA-NICOTINAMIDE D-RIBONUCLEOTIDE AND QUADRUPLE MUTANT PHE-175/PHE-224/PHE-291/PHE-332</scope>
    <scope>FUNCTION</scope>
    <scope>CATALYTIC ACTIVITY</scope>
    <scope>ACTIVITY REGULATION</scope>
    <scope>BIOPHYSICOCHEMICAL PROPERTIES</scope>
    <scope>PATHWAY</scope>
    <scope>SUBUNIT</scope>
    <scope>DOMAIN</scope>
    <scope>PHOSPHORYLATION AT HIS-229</scope>
    <scope>DISRUPTION PHENOTYPE</scope>
    <scope>MUTAGENESIS OF HIS-175; ARG-180; ASP-203; ILE-224; HIS-229; VAL-291; ARG-293; ILE-332; ASP-335 AND ARG-373</scope>
    <source>
        <strain>8004</strain>
    </source>
</reference>
<organism>
    <name type="scientific">Xanthomonas campestris pv. campestris (strain 8004)</name>
    <dbReference type="NCBI Taxonomy" id="314565"/>
    <lineage>
        <taxon>Bacteria</taxon>
        <taxon>Pseudomonadati</taxon>
        <taxon>Pseudomonadota</taxon>
        <taxon>Gammaproteobacteria</taxon>
        <taxon>Lysobacterales</taxon>
        <taxon>Lysobacteraceae</taxon>
        <taxon>Xanthomonas</taxon>
    </lineage>
</organism>
<gene>
    <name evidence="5" type="ordered locus">XC_0719</name>
</gene>
<keyword id="KW-0002">3D-structure</keyword>
<keyword id="KW-0328">Glycosyltransferase</keyword>
<keyword id="KW-0597">Phosphoprotein</keyword>
<keyword id="KW-0662">Pyridine nucleotide biosynthesis</keyword>
<keyword id="KW-0808">Transferase</keyword>
<comment type="function">
    <text evidence="1">Catalyzes the condensation of nicotinamide with 5-phosphoribosyl-1-pyrophosphate to yield nicotinamide mononucleotide, an intermediate in the biosynthesis of NAD (PubMed:38429435). Plays an important role in the biosynthesis of NAD via the nicotinamide (NAM) salvage pathway (PubMed:38429435). Is also capable of hydrolyzing ATP and shows ATP-dependent autophosphorylation activity (PubMed:38429435).</text>
</comment>
<comment type="catalytic activity">
    <reaction evidence="1">
        <text>beta-nicotinamide D-ribonucleotide + diphosphate = 5-phospho-alpha-D-ribose 1-diphosphate + nicotinamide + H(+)</text>
        <dbReference type="Rhea" id="RHEA:16149"/>
        <dbReference type="ChEBI" id="CHEBI:14649"/>
        <dbReference type="ChEBI" id="CHEBI:15378"/>
        <dbReference type="ChEBI" id="CHEBI:17154"/>
        <dbReference type="ChEBI" id="CHEBI:33019"/>
        <dbReference type="ChEBI" id="CHEBI:58017"/>
        <dbReference type="EC" id="2.4.2.12"/>
    </reaction>
    <physiologicalReaction direction="right-to-left" evidence="1">
        <dbReference type="Rhea" id="RHEA:16151"/>
    </physiologicalReaction>
</comment>
<comment type="activity regulation">
    <text evidence="1">ATP-dependent autophosphorylation plays a vital role in nicotinamide binding and enzyme activation (PubMed:38429435). Activity is inhibited by FK866 (PubMed:38429435).</text>
</comment>
<comment type="biophysicochemical properties">
    <kinetics>
        <KM evidence="1">0.057 uM for nicotinamide</KM>
        <KM evidence="1">24.38 uM for 5-phospho-alpha-D-ribose 1-diphosphate</KM>
        <KM evidence="1">0.56 mM for ATP</KM>
        <text evidence="1">kcat is 1.84 sec(-1) with nicotinamide as substrate. kcat is 6.99 sec(-1) with 5-phospho-alpha-D-ribose 1-diphosphate as substrate. kcat is 4.40 sec(-1) with ATP as substrate.</text>
    </kinetics>
</comment>
<comment type="pathway">
    <text evidence="1">Cofactor biosynthesis; NAD(+) biosynthesis; nicotinamide D-ribonucleotide from 5-phospho-alpha-D-ribose 1-diphosphate and nicotinamide: step 1/1.</text>
</comment>
<comment type="subunit">
    <text evidence="1">Homodimer (PubMed:38429435). The dimeric structure consists of two protomers arranged head to tail, with domain A on one protomer interacting with domain B on the other protomer (PubMed:38429435).</text>
</comment>
<comment type="domain">
    <text evidence="1">Both protomers contribute to the formation of the active site (PubMed:38429435). Contains two distinct NAM binding sites, one NAM molecule binds in the catalytic site and the other binds in a lateral tunnel that connects the active site (PubMed:38429435). The binding of NAM molecules in these two sites is positively cooperative (PubMed:38429435). The NAM binding tunnel is important for both catalysis and inhibitor binding (PubMed:38429435).</text>
</comment>
<comment type="PTM">
    <text evidence="1">Phosphorylation at His-229 plays a crucial role in enhancing the substrate affinity and is important for maintaining enzymatic activity.</text>
</comment>
<comment type="disruption phenotype">
    <text evidence="1">The deletion mutant is able to grow in the minimal medium MMX, similar to the wild-type strain (PubMed:38429435). The XC_0719-XC_1067/nadE double deletion mutant is only able to grow in MMX supplemented with NAD(+), but not in MMX alone (PubMed:38429435).</text>
</comment>
<comment type="similarity">
    <text evidence="3">Belongs to the NAPRTase family.</text>
</comment>
<dbReference type="EC" id="2.4.2.12" evidence="1"/>
<dbReference type="EMBL" id="CP000050">
    <property type="protein sequence ID" value="AAY47797.1"/>
    <property type="molecule type" value="Genomic_DNA"/>
</dbReference>
<dbReference type="RefSeq" id="WP_011038543.1">
    <property type="nucleotide sequence ID" value="NZ_CP155948.1"/>
</dbReference>
<dbReference type="PDB" id="7YQO">
    <property type="method" value="X-ray"/>
    <property type="resolution" value="1.79 A"/>
    <property type="chains" value="A/B=1-468"/>
</dbReference>
<dbReference type="PDB" id="7YQP">
    <property type="method" value="X-ray"/>
    <property type="resolution" value="2.09 A"/>
    <property type="chains" value="A=1-468"/>
</dbReference>
<dbReference type="PDB" id="7YQQ">
    <property type="method" value="X-ray"/>
    <property type="resolution" value="2.22 A"/>
    <property type="chains" value="A/B=1-468"/>
</dbReference>
<dbReference type="PDB" id="7YQR">
    <property type="method" value="X-ray"/>
    <property type="resolution" value="2.00 A"/>
    <property type="chains" value="A/B=1-468"/>
</dbReference>
<dbReference type="PDB" id="8IGZ">
    <property type="method" value="X-ray"/>
    <property type="resolution" value="3.11 A"/>
    <property type="chains" value="A/B=1-468"/>
</dbReference>
<dbReference type="PDBsum" id="7YQO"/>
<dbReference type="PDBsum" id="7YQP"/>
<dbReference type="PDBsum" id="7YQQ"/>
<dbReference type="PDBsum" id="7YQR"/>
<dbReference type="PDBsum" id="8IGZ"/>
<dbReference type="SMR" id="A0A0H2X5R2"/>
<dbReference type="KEGG" id="xcb:XC_0719"/>
<dbReference type="HOGENOM" id="CLU_012550_2_0_6"/>
<dbReference type="UniPathway" id="UPA00253">
    <property type="reaction ID" value="UER00890"/>
</dbReference>
<dbReference type="Proteomes" id="UP000000420">
    <property type="component" value="Chromosome"/>
</dbReference>
<dbReference type="GO" id="GO:0047280">
    <property type="term" value="F:nicotinamide phosphoribosyltransferase activity"/>
    <property type="evidence" value="ECO:0007669"/>
    <property type="project" value="TreeGrafter"/>
</dbReference>
<dbReference type="GO" id="GO:0009435">
    <property type="term" value="P:NAD biosynthetic process"/>
    <property type="evidence" value="ECO:0007669"/>
    <property type="project" value="InterPro"/>
</dbReference>
<dbReference type="CDD" id="cd01569">
    <property type="entry name" value="PBEF_like"/>
    <property type="match status" value="1"/>
</dbReference>
<dbReference type="Gene3D" id="3.20.20.70">
    <property type="entry name" value="Aldolase class I"/>
    <property type="match status" value="1"/>
</dbReference>
<dbReference type="InterPro" id="IPR013785">
    <property type="entry name" value="Aldolase_TIM"/>
</dbReference>
<dbReference type="InterPro" id="IPR041529">
    <property type="entry name" value="DUF5598"/>
</dbReference>
<dbReference type="InterPro" id="IPR041525">
    <property type="entry name" value="N/Namide_PRibTrfase"/>
</dbReference>
<dbReference type="InterPro" id="IPR016471">
    <property type="entry name" value="Nicotinamide_PRibTrfase"/>
</dbReference>
<dbReference type="InterPro" id="IPR036068">
    <property type="entry name" value="Nicotinate_pribotase-like_C"/>
</dbReference>
<dbReference type="NCBIfam" id="NF006629">
    <property type="entry name" value="PRK09198.1"/>
    <property type="match status" value="1"/>
</dbReference>
<dbReference type="PANTHER" id="PTHR43816">
    <property type="entry name" value="NICOTINAMIDE PHOSPHORIBOSYLTRANSFERASE"/>
    <property type="match status" value="1"/>
</dbReference>
<dbReference type="PANTHER" id="PTHR43816:SF1">
    <property type="entry name" value="NICOTINAMIDE PHOSPHORIBOSYLTRANSFERASE"/>
    <property type="match status" value="1"/>
</dbReference>
<dbReference type="Pfam" id="PF18127">
    <property type="entry name" value="NAMPT_N"/>
    <property type="match status" value="1"/>
</dbReference>
<dbReference type="Pfam" id="PF04095">
    <property type="entry name" value="NAPRTase"/>
    <property type="match status" value="1"/>
</dbReference>
<dbReference type="PIRSF" id="PIRSF005943">
    <property type="entry name" value="NMPRT"/>
    <property type="match status" value="1"/>
</dbReference>
<dbReference type="SUPFAM" id="SSF51690">
    <property type="entry name" value="Nicotinate/Quinolinate PRTase C-terminal domain-like"/>
    <property type="match status" value="1"/>
</dbReference>
<feature type="chain" id="PRO_0000461629" description="Nicotinamide phosphoribosyltransferase">
    <location>
        <begin position="1"/>
        <end position="468"/>
    </location>
</feature>
<feature type="binding site" evidence="4 8">
    <location>
        <position position="180"/>
    </location>
    <ligand>
        <name>diphosphate</name>
        <dbReference type="ChEBI" id="CHEBI:33019"/>
    </ligand>
</feature>
<feature type="binding site" evidence="1 8">
    <location>
        <position position="203"/>
    </location>
    <ligand>
        <name>beta-nicotinamide D-ribonucleotide</name>
        <dbReference type="ChEBI" id="CHEBI:14649"/>
    </ligand>
</feature>
<feature type="binding site" evidence="4 8">
    <location>
        <position position="229"/>
    </location>
    <ligand>
        <name>diphosphate</name>
        <dbReference type="ChEBI" id="CHEBI:33019"/>
    </ligand>
</feature>
<feature type="binding site" evidence="4 8">
    <location>
        <position position="293"/>
    </location>
    <ligand>
        <name>diphosphate</name>
        <dbReference type="ChEBI" id="CHEBI:33019"/>
    </ligand>
</feature>
<feature type="binding site" evidence="1 8">
    <location>
        <position position="335"/>
    </location>
    <ligand>
        <name>beta-nicotinamide D-ribonucleotide</name>
        <dbReference type="ChEBI" id="CHEBI:14649"/>
    </ligand>
</feature>
<feature type="binding site" evidence="1 8">
    <location>
        <position position="373"/>
    </location>
    <ligand>
        <name>beta-nicotinamide D-ribonucleotide</name>
        <dbReference type="ChEBI" id="CHEBI:14649"/>
    </ligand>
</feature>
<feature type="modified residue" description="Phosphohistidine; by autocatalysis" evidence="1">
    <location>
        <position position="229"/>
    </location>
</feature>
<feature type="mutagenesis site" description="Blocks the tunnel, results in a 403-fold decrease in catalytic efficiency with nicotinamide and shows a weaker binding affinity for the inhibitor FK866; when associated with F-224; F-291 and F-332." evidence="1">
    <original>H</original>
    <variation>F</variation>
    <location>
        <position position="175"/>
    </location>
</feature>
<feature type="mutagenesis site" description="Loss of activity." evidence="1">
    <original>R</original>
    <variation>A</variation>
    <location>
        <position position="180"/>
    </location>
</feature>
<feature type="mutagenesis site" description="Decrease in activity." evidence="1">
    <original>D</original>
    <variation>N</variation>
    <location>
        <position position="203"/>
    </location>
</feature>
<feature type="mutagenesis site" description="Blocks the tunnel, results in a 403-fold decrease in catalytic efficiency with nicotinamide and shows a weaker binding affinity for the inhibitor FK866; when associated with F-175; F-291 and F-332." evidence="1">
    <original>I</original>
    <variation>F</variation>
    <location>
        <position position="224"/>
    </location>
</feature>
<feature type="mutagenesis site" description="Retains some level of ATPase activity but it completely loses the ability to produce nicotinamide mononucleotide from nicotinamide." evidence="1">
    <original>H</original>
    <variation>A</variation>
    <location>
        <position position="229"/>
    </location>
</feature>
<feature type="mutagenesis site" description="Loss of activity." evidence="1">
    <original>H</original>
    <variation>K</variation>
    <variation>R</variation>
    <location>
        <position position="229"/>
    </location>
</feature>
<feature type="mutagenesis site" description="Blocks the tunnel, results in a 403-fold decrease in catalytic efficiency with nicotinamide and shows a weaker binding affinity for the inhibitor FK866; when associated with F-175; F-224 and F-332." evidence="1">
    <original>V</original>
    <variation>F</variation>
    <location>
        <position position="291"/>
    </location>
</feature>
<feature type="mutagenesis site" description="Almost no change in activity." evidence="1">
    <original>R</original>
    <variation>A</variation>
    <location>
        <position position="293"/>
    </location>
</feature>
<feature type="mutagenesis site" description="Blocks the tunnel, results in a 403-fold decrease in catalytic efficiency with nicotinamide and shows a weaker binding affinity for the inhibitor FK866; when associated with F-175; F-224 and F-291." evidence="1">
    <original>I</original>
    <variation>F</variation>
    <location>
        <position position="332"/>
    </location>
</feature>
<feature type="mutagenesis site" description="Strong decrease in activity." evidence="1">
    <original>D</original>
    <variation>N</variation>
    <location>
        <position position="335"/>
    </location>
</feature>
<feature type="mutagenesis site" description="Retains low activity." evidence="1">
    <original>D</original>
    <variation>S</variation>
    <location>
        <position position="335"/>
    </location>
</feature>
<feature type="mutagenesis site" description="Loss of activity." evidence="1">
    <original>R</original>
    <variation>A</variation>
    <location>
        <position position="373"/>
    </location>
</feature>
<feature type="helix" evidence="11">
    <location>
        <begin position="2"/>
        <end position="4"/>
    </location>
</feature>
<feature type="helix" evidence="11">
    <location>
        <begin position="7"/>
        <end position="9"/>
    </location>
</feature>
<feature type="strand" evidence="11">
    <location>
        <begin position="10"/>
        <end position="12"/>
    </location>
</feature>
<feature type="helix" evidence="11">
    <location>
        <begin position="13"/>
        <end position="21"/>
    </location>
</feature>
<feature type="strand" evidence="11">
    <location>
        <begin position="26"/>
        <end position="35"/>
    </location>
</feature>
<feature type="strand" evidence="11">
    <location>
        <begin position="39"/>
        <end position="44"/>
    </location>
</feature>
<feature type="helix" evidence="11">
    <location>
        <begin position="48"/>
        <end position="55"/>
    </location>
</feature>
<feature type="helix" evidence="11">
    <location>
        <begin position="62"/>
        <end position="75"/>
    </location>
</feature>
<feature type="helix" evidence="11">
    <location>
        <begin position="81"/>
        <end position="91"/>
    </location>
</feature>
<feature type="strand" evidence="11">
    <location>
        <begin position="97"/>
        <end position="101"/>
    </location>
</feature>
<feature type="strand" evidence="11">
    <location>
        <begin position="107"/>
        <end position="119"/>
    </location>
</feature>
<feature type="turn" evidence="11">
    <location>
        <begin position="123"/>
        <end position="126"/>
    </location>
</feature>
<feature type="helix" evidence="11">
    <location>
        <begin position="127"/>
        <end position="130"/>
    </location>
</feature>
<feature type="helix" evidence="11">
    <location>
        <begin position="132"/>
        <end position="136"/>
    </location>
</feature>
<feature type="helix" evidence="11">
    <location>
        <begin position="139"/>
        <end position="162"/>
    </location>
</feature>
<feature type="helix" evidence="11">
    <location>
        <begin position="166"/>
        <end position="169"/>
    </location>
</feature>
<feature type="helix" evidence="11">
    <location>
        <begin position="170"/>
        <end position="172"/>
    </location>
</feature>
<feature type="strand" evidence="11">
    <location>
        <begin position="173"/>
        <end position="176"/>
    </location>
</feature>
<feature type="helix" evidence="11">
    <location>
        <begin position="178"/>
        <end position="181"/>
    </location>
</feature>
<feature type="helix" evidence="11">
    <location>
        <begin position="185"/>
        <end position="196"/>
    </location>
</feature>
<feature type="strand" evidence="11">
    <location>
        <begin position="200"/>
        <end position="202"/>
    </location>
</feature>
<feature type="helix" evidence="11">
    <location>
        <begin position="205"/>
        <end position="214"/>
    </location>
</feature>
<feature type="helix" evidence="11">
    <location>
        <begin position="229"/>
        <end position="233"/>
    </location>
</feature>
<feature type="helix" evidence="11">
    <location>
        <begin position="237"/>
        <end position="239"/>
    </location>
</feature>
<feature type="helix" evidence="11">
    <location>
        <begin position="240"/>
        <end position="251"/>
    </location>
</feature>
<feature type="strand" evidence="11">
    <location>
        <begin position="257"/>
        <end position="261"/>
    </location>
</feature>
<feature type="helix" evidence="11">
    <location>
        <begin position="267"/>
        <end position="272"/>
    </location>
</feature>
<feature type="helix" evidence="11">
    <location>
        <begin position="273"/>
        <end position="278"/>
    </location>
</feature>
<feature type="helix" evidence="11">
    <location>
        <begin position="280"/>
        <end position="286"/>
    </location>
</feature>
<feature type="strand" evidence="11">
    <location>
        <begin position="289"/>
        <end position="293"/>
    </location>
</feature>
<feature type="helix" evidence="11">
    <location>
        <begin position="299"/>
        <end position="314"/>
    </location>
</feature>
<feature type="strand" evidence="11">
    <location>
        <begin position="316"/>
        <end position="318"/>
    </location>
</feature>
<feature type="strand" evidence="11">
    <location>
        <begin position="324"/>
        <end position="333"/>
    </location>
</feature>
<feature type="helix" evidence="11">
    <location>
        <begin position="339"/>
        <end position="351"/>
    </location>
</feature>
<feature type="helix" evidence="11">
    <location>
        <begin position="356"/>
        <end position="358"/>
    </location>
</feature>
<feature type="strand" evidence="11">
    <location>
        <begin position="359"/>
        <end position="364"/>
    </location>
</feature>
<feature type="helix" evidence="11">
    <location>
        <begin position="365"/>
        <end position="368"/>
    </location>
</feature>
<feature type="turn" evidence="11">
    <location>
        <begin position="373"/>
        <end position="377"/>
    </location>
</feature>
<feature type="strand" evidence="11">
    <location>
        <begin position="378"/>
        <end position="387"/>
    </location>
</feature>
<feature type="strand" evidence="11">
    <location>
        <begin position="390"/>
        <end position="393"/>
    </location>
</feature>
<feature type="helix" evidence="11">
    <location>
        <begin position="398"/>
        <end position="401"/>
    </location>
</feature>
<feature type="strand" evidence="11">
    <location>
        <begin position="409"/>
        <end position="416"/>
    </location>
</feature>
<feature type="turn" evidence="11">
    <location>
        <begin position="417"/>
        <end position="419"/>
    </location>
</feature>
<feature type="strand" evidence="11">
    <location>
        <begin position="422"/>
        <end position="426"/>
    </location>
</feature>
<feature type="helix" evidence="11">
    <location>
        <begin position="429"/>
        <end position="432"/>
    </location>
</feature>
<feature type="turn" evidence="11">
    <location>
        <begin position="433"/>
        <end position="436"/>
    </location>
</feature>
<feature type="strand" evidence="11">
    <location>
        <begin position="437"/>
        <end position="439"/>
    </location>
</feature>
<feature type="strand" evidence="11">
    <location>
        <begin position="442"/>
        <end position="446"/>
    </location>
</feature>
<feature type="helix" evidence="11">
    <location>
        <begin position="456"/>
        <end position="462"/>
    </location>
</feature>
<protein>
    <recommendedName>
        <fullName evidence="2">Nicotinamide phosphoribosyltransferase</fullName>
        <shortName evidence="2">NAM phosphoribosyltransferase</shortName>
        <shortName evidence="2">NAMPT</shortName>
        <ecNumber evidence="1">2.4.2.12</ecNumber>
    </recommendedName>
</protein>
<sequence>MHYLDNLLLNTDSYKASHWLQYPPGTDASFFYVESRGGVYDQTAFFGLQSILKEAINRPVTHADIDDAKALLAAHGEPFNEAGWRDIVDRLGGQLPIRIRAVPEGCVVPTHNVLMTIESTDAKAFWVPSYLETLLLRVWYPVTVATVSWQVKQIVRDFLQRTSDDPEGQLPFKLHDFGARGVSSLGSAALGGAAHLVNFLGTDTLSALLLARAHYHTPVAGYSIPAAEHSTITSWGREREVDAYRNMLTQFARPGAIVAVVSDSYDIYRAIREHWGTTLREEIIASGATVVIRPDSGDPVDVVEQCLLLLDEAFGHQVNGKGYKVLNHVRVIQGDGINPQSLRAILERITAAGYAADNVAFGMGGALLQKVDRDTQKFALKCSAVRVDGAWIDVYKDPITDQGKQSKRGRLTLLRDRATGQYRSALLDEVATHAGDSDDALVTVWENGQMLREWTLEQVRAHADAARL</sequence>
<name>NAMPT_XANC8</name>
<accession>A0A0H2X5R2</accession>
<proteinExistence type="evidence at protein level"/>